<keyword id="KW-0963">Cytoplasm</keyword>
<keyword id="KW-0206">Cytoskeleton</keyword>
<keyword id="KW-0342">GTP-binding</keyword>
<keyword id="KW-0378">Hydrolase</keyword>
<keyword id="KW-0460">Magnesium</keyword>
<keyword id="KW-0479">Metal-binding</keyword>
<keyword id="KW-0493">Microtubule</keyword>
<keyword id="KW-0547">Nucleotide-binding</keyword>
<protein>
    <recommendedName>
        <fullName>Tubulin alpha-1 chain</fullName>
        <ecNumber evidence="2">3.6.5.-</ecNumber>
    </recommendedName>
</protein>
<name>TBA1_PELFA</name>
<proteinExistence type="evidence at transcript level"/>
<reference key="1">
    <citation type="online journal article" date="1997" name="Plant Gene Register">
        <title>The brown alga, Pelvetia fastigiata, expresses two alpha-tubulin sequences.</title>
        <authorList>
            <person name="Coffman H.R."/>
            <person name="Kropf D.L."/>
        </authorList>
        <locator>PGR97-019</locator>
    </citation>
    <scope>NUCLEOTIDE SEQUENCE [MRNA]</scope>
</reference>
<dbReference type="EC" id="3.6.5.-" evidence="2"/>
<dbReference type="EMBL" id="U58641">
    <property type="protein sequence ID" value="AAB68031.1"/>
    <property type="molecule type" value="mRNA"/>
</dbReference>
<dbReference type="SMR" id="Q40831"/>
<dbReference type="GO" id="GO:0005737">
    <property type="term" value="C:cytoplasm"/>
    <property type="evidence" value="ECO:0007669"/>
    <property type="project" value="UniProtKB-KW"/>
</dbReference>
<dbReference type="GO" id="GO:0005874">
    <property type="term" value="C:microtubule"/>
    <property type="evidence" value="ECO:0007669"/>
    <property type="project" value="UniProtKB-KW"/>
</dbReference>
<dbReference type="GO" id="GO:0005525">
    <property type="term" value="F:GTP binding"/>
    <property type="evidence" value="ECO:0007669"/>
    <property type="project" value="UniProtKB-KW"/>
</dbReference>
<dbReference type="GO" id="GO:0016787">
    <property type="term" value="F:hydrolase activity"/>
    <property type="evidence" value="ECO:0007669"/>
    <property type="project" value="UniProtKB-KW"/>
</dbReference>
<dbReference type="GO" id="GO:0046872">
    <property type="term" value="F:metal ion binding"/>
    <property type="evidence" value="ECO:0007669"/>
    <property type="project" value="UniProtKB-KW"/>
</dbReference>
<dbReference type="GO" id="GO:0005200">
    <property type="term" value="F:structural constituent of cytoskeleton"/>
    <property type="evidence" value="ECO:0007669"/>
    <property type="project" value="InterPro"/>
</dbReference>
<dbReference type="GO" id="GO:0007017">
    <property type="term" value="P:microtubule-based process"/>
    <property type="evidence" value="ECO:0007669"/>
    <property type="project" value="InterPro"/>
</dbReference>
<dbReference type="CDD" id="cd02186">
    <property type="entry name" value="alpha_tubulin"/>
    <property type="match status" value="1"/>
</dbReference>
<dbReference type="FunFam" id="1.10.287.600:FF:000005">
    <property type="entry name" value="Tubulin alpha chain"/>
    <property type="match status" value="1"/>
</dbReference>
<dbReference type="FunFam" id="3.30.1330.20:FF:000001">
    <property type="entry name" value="Tubulin alpha chain"/>
    <property type="match status" value="1"/>
</dbReference>
<dbReference type="FunFam" id="3.40.50.1440:FF:000004">
    <property type="entry name" value="Tubulin alpha chain"/>
    <property type="match status" value="1"/>
</dbReference>
<dbReference type="Gene3D" id="1.10.287.600">
    <property type="entry name" value="Helix hairpin bin"/>
    <property type="match status" value="1"/>
</dbReference>
<dbReference type="Gene3D" id="3.30.1330.20">
    <property type="entry name" value="Tubulin/FtsZ, C-terminal domain"/>
    <property type="match status" value="1"/>
</dbReference>
<dbReference type="Gene3D" id="3.40.50.1440">
    <property type="entry name" value="Tubulin/FtsZ, GTPase domain"/>
    <property type="match status" value="1"/>
</dbReference>
<dbReference type="InterPro" id="IPR002452">
    <property type="entry name" value="Alpha_tubulin"/>
</dbReference>
<dbReference type="InterPro" id="IPR008280">
    <property type="entry name" value="Tub_FtsZ_C"/>
</dbReference>
<dbReference type="InterPro" id="IPR000217">
    <property type="entry name" value="Tubulin"/>
</dbReference>
<dbReference type="InterPro" id="IPR037103">
    <property type="entry name" value="Tubulin/FtsZ-like_C"/>
</dbReference>
<dbReference type="InterPro" id="IPR018316">
    <property type="entry name" value="Tubulin/FtsZ_2-layer-sand-dom"/>
</dbReference>
<dbReference type="InterPro" id="IPR036525">
    <property type="entry name" value="Tubulin/FtsZ_GTPase_sf"/>
</dbReference>
<dbReference type="InterPro" id="IPR023123">
    <property type="entry name" value="Tubulin_C"/>
</dbReference>
<dbReference type="InterPro" id="IPR017975">
    <property type="entry name" value="Tubulin_CS"/>
</dbReference>
<dbReference type="InterPro" id="IPR003008">
    <property type="entry name" value="Tubulin_FtsZ_GTPase"/>
</dbReference>
<dbReference type="PANTHER" id="PTHR11588">
    <property type="entry name" value="TUBULIN"/>
    <property type="match status" value="1"/>
</dbReference>
<dbReference type="Pfam" id="PF00091">
    <property type="entry name" value="Tubulin"/>
    <property type="match status" value="1"/>
</dbReference>
<dbReference type="Pfam" id="PF03953">
    <property type="entry name" value="Tubulin_C"/>
    <property type="match status" value="1"/>
</dbReference>
<dbReference type="PRINTS" id="PR01162">
    <property type="entry name" value="ALPHATUBULIN"/>
</dbReference>
<dbReference type="PRINTS" id="PR01161">
    <property type="entry name" value="TUBULIN"/>
</dbReference>
<dbReference type="SMART" id="SM00864">
    <property type="entry name" value="Tubulin"/>
    <property type="match status" value="1"/>
</dbReference>
<dbReference type="SMART" id="SM00865">
    <property type="entry name" value="Tubulin_C"/>
    <property type="match status" value="1"/>
</dbReference>
<dbReference type="SUPFAM" id="SSF55307">
    <property type="entry name" value="Tubulin C-terminal domain-like"/>
    <property type="match status" value="1"/>
</dbReference>
<dbReference type="SUPFAM" id="SSF52490">
    <property type="entry name" value="Tubulin nucleotide-binding domain-like"/>
    <property type="match status" value="1"/>
</dbReference>
<dbReference type="PROSITE" id="PS00227">
    <property type="entry name" value="TUBULIN"/>
    <property type="match status" value="1"/>
</dbReference>
<evidence type="ECO:0000250" key="1"/>
<evidence type="ECO:0000250" key="2">
    <source>
        <dbReference type="UniProtKB" id="P68363"/>
    </source>
</evidence>
<evidence type="ECO:0000256" key="3">
    <source>
        <dbReference type="SAM" id="MobiDB-lite"/>
    </source>
</evidence>
<evidence type="ECO:0000305" key="4"/>
<accession>Q40831</accession>
<sequence length="453" mass="49937">MRECISIHIGQAGIQVGNACWELYCLEHGIQPNGQMPADNTTGGGDDAFNTFFSETGAGKHVPRAVYVDLEPTVCDEVRTGSYRQLYHPEQIISGKEDAANNYARGHYTIGKEIVDIVLDRIRKLSDNCTGLQGFLVFHATGGGTGSGLGSLLLERLSVDYGRKSKLSFAITPAPQVATAVVEPYNSVLSTHALLEHTDCTFCLDNEALYDVCRRNLDIERPTYTNLNRLVAQVISSLTASLRFDGALNVDVTEFQTNLVPYPRIHFMLTSYAPIISAEKAYHEQLSVAEITNSVFEPAGMMTKCDPRHGKYMACCLMYRGDVVPKDVNAAVATIKTKRTIQFVDWCPTGFKCGINYQPPTAVPGGDLARVQRAVCMVANTTAIAEALSRIDHKFDLMYAKRAFVHWYVGEGMEEGEFSEAREDLVALEKDYEEVGAETADGDGEEEEFGEEY</sequence>
<comment type="function">
    <text>Tubulin is the major constituent of microtubules, a cylinder consisting of laterally associated linear protofilaments composed of alpha- and beta-tubulin heterodimers. Microtubules grow by the addition of GTP-tubulin dimers to the microtubule end, where a stabilizing cap forms. Below the cap, tubulin dimers are in GDP-bound state, owing to GTPase activity of alpha-tubulin.</text>
</comment>
<comment type="catalytic activity">
    <reaction evidence="2">
        <text>GTP + H2O = GDP + phosphate + H(+)</text>
        <dbReference type="Rhea" id="RHEA:19669"/>
        <dbReference type="ChEBI" id="CHEBI:15377"/>
        <dbReference type="ChEBI" id="CHEBI:15378"/>
        <dbReference type="ChEBI" id="CHEBI:37565"/>
        <dbReference type="ChEBI" id="CHEBI:43474"/>
        <dbReference type="ChEBI" id="CHEBI:58189"/>
    </reaction>
    <physiologicalReaction direction="left-to-right" evidence="2">
        <dbReference type="Rhea" id="RHEA:19670"/>
    </physiologicalReaction>
</comment>
<comment type="cofactor">
    <cofactor evidence="2">
        <name>Mg(2+)</name>
        <dbReference type="ChEBI" id="CHEBI:18420"/>
    </cofactor>
</comment>
<comment type="subunit">
    <text>Dimer of alpha and beta chains. A typical microtubule is a hollow water-filled tube with an outer diameter of 25 nm and an inner diameter of 15 nM. Alpha-beta heterodimers associate head-to-tail to form protofilaments running lengthwise along the microtubule wall with the beta-tubulin subunit facing the microtubule plus end conferring a structural polarity. Microtubules usually have 13 protofilaments but different protofilament numbers can be found in some organisms and specialized cells.</text>
</comment>
<comment type="subcellular location">
    <subcellularLocation>
        <location>Cytoplasm</location>
        <location>Cytoskeleton</location>
    </subcellularLocation>
</comment>
<comment type="PTM">
    <text evidence="1">Undergoes a tyrosination/detyrosination cycle, the cyclic removal and re-addition of a C-terminal tyrosine residue by the enzymes tubulin tyrosine carboxypeptidase (TTCP) and tubulin tyrosine ligase (TTL), respectively.</text>
</comment>
<comment type="similarity">
    <text evidence="4">Belongs to the tubulin family.</text>
</comment>
<organism>
    <name type="scientific">Pelvetia fastigiata</name>
    <name type="common">Brown alga</name>
    <name type="synonym">Fucodium fastigiatum</name>
    <dbReference type="NCBI Taxonomy" id="48072"/>
    <lineage>
        <taxon>Eukaryota</taxon>
        <taxon>Sar</taxon>
        <taxon>Stramenopiles</taxon>
        <taxon>Ochrophyta</taxon>
        <taxon>PX clade</taxon>
        <taxon>Phaeophyceae</taxon>
        <taxon>Fucales</taxon>
        <taxon>Fucaceae</taxon>
        <taxon>Pelvetia</taxon>
    </lineage>
</organism>
<feature type="chain" id="PRO_0000048211" description="Tubulin alpha-1 chain">
    <location>
        <begin position="1"/>
        <end position="453"/>
    </location>
</feature>
<feature type="region of interest" description="Disordered" evidence="3">
    <location>
        <begin position="433"/>
        <end position="453"/>
    </location>
</feature>
<feature type="active site" evidence="2">
    <location>
        <position position="254"/>
    </location>
</feature>
<feature type="binding site" evidence="2">
    <location>
        <position position="11"/>
    </location>
    <ligand>
        <name>GTP</name>
        <dbReference type="ChEBI" id="CHEBI:37565"/>
    </ligand>
</feature>
<feature type="binding site" evidence="2">
    <location>
        <position position="71"/>
    </location>
    <ligand>
        <name>GTP</name>
        <dbReference type="ChEBI" id="CHEBI:37565"/>
    </ligand>
</feature>
<feature type="binding site" evidence="2">
    <location>
        <position position="71"/>
    </location>
    <ligand>
        <name>Mg(2+)</name>
        <dbReference type="ChEBI" id="CHEBI:18420"/>
    </ligand>
</feature>
<feature type="binding site" evidence="2">
    <location>
        <position position="144"/>
    </location>
    <ligand>
        <name>GTP</name>
        <dbReference type="ChEBI" id="CHEBI:37565"/>
    </ligand>
</feature>
<feature type="binding site" evidence="2">
    <location>
        <position position="145"/>
    </location>
    <ligand>
        <name>GTP</name>
        <dbReference type="ChEBI" id="CHEBI:37565"/>
    </ligand>
</feature>
<feature type="binding site" evidence="2">
    <location>
        <position position="179"/>
    </location>
    <ligand>
        <name>GTP</name>
        <dbReference type="ChEBI" id="CHEBI:37565"/>
    </ligand>
</feature>
<feature type="binding site" evidence="2">
    <location>
        <position position="206"/>
    </location>
    <ligand>
        <name>GTP</name>
        <dbReference type="ChEBI" id="CHEBI:37565"/>
    </ligand>
</feature>
<feature type="binding site" evidence="2">
    <location>
        <position position="228"/>
    </location>
    <ligand>
        <name>GTP</name>
        <dbReference type="ChEBI" id="CHEBI:37565"/>
    </ligand>
</feature>
<feature type="site" description="Involved in polymerization">
    <location>
        <position position="453"/>
    </location>
</feature>
<gene>
    <name type="primary">TUBA1</name>
</gene>